<dbReference type="EMBL" id="U00096">
    <property type="protein sequence ID" value="AAC74412.1"/>
    <property type="molecule type" value="Genomic_DNA"/>
</dbReference>
<dbReference type="EMBL" id="AP009048">
    <property type="protein sequence ID" value="BAA14923.1"/>
    <property type="molecule type" value="Genomic_DNA"/>
</dbReference>
<dbReference type="PIR" id="E64882">
    <property type="entry name" value="E64882"/>
</dbReference>
<dbReference type="RefSeq" id="NP_415846.1">
    <property type="nucleotide sequence ID" value="NC_000913.3"/>
</dbReference>
<dbReference type="RefSeq" id="WP_000559900.1">
    <property type="nucleotide sequence ID" value="NZ_STEB01000005.1"/>
</dbReference>
<dbReference type="PDB" id="5Y4O">
    <property type="method" value="EM"/>
    <property type="resolution" value="3.80 A"/>
    <property type="chains" value="A/B/C/D/E/F/G=1-343"/>
</dbReference>
<dbReference type="PDB" id="6URT">
    <property type="method" value="EM"/>
    <property type="resolution" value="3.27 A"/>
    <property type="chains" value="A/B/C/D/E/F/G=1-343"/>
</dbReference>
<dbReference type="PDB" id="6ZYD">
    <property type="method" value="EM"/>
    <property type="resolution" value="3.00 A"/>
    <property type="chains" value="A/B/C/D/E/F/G=1-343"/>
</dbReference>
<dbReference type="PDB" id="6ZYE">
    <property type="method" value="EM"/>
    <property type="resolution" value="4.10 A"/>
    <property type="chains" value="A/B/C/D/E/F/G=1-343"/>
</dbReference>
<dbReference type="PDB" id="7N4T">
    <property type="method" value="EM"/>
    <property type="resolution" value="2.40 A"/>
    <property type="chains" value="A/B/C/D/E/F/G=1-343"/>
</dbReference>
<dbReference type="PDBsum" id="5Y4O"/>
<dbReference type="PDBsum" id="6URT"/>
<dbReference type="PDBsum" id="6ZYD"/>
<dbReference type="PDBsum" id="6ZYE"/>
<dbReference type="PDBsum" id="7N4T"/>
<dbReference type="EMDB" id="EMD-11557"/>
<dbReference type="EMDB" id="EMD-11560"/>
<dbReference type="EMDB" id="EMD-20862"/>
<dbReference type="EMDB" id="EMD-24177"/>
<dbReference type="EMDB" id="EMD-3035"/>
<dbReference type="SMR" id="P0AEB5"/>
<dbReference type="BioGRID" id="4260142">
    <property type="interactions" value="225"/>
</dbReference>
<dbReference type="BioGRID" id="850264">
    <property type="interactions" value="3"/>
</dbReference>
<dbReference type="DIP" id="DIP-12740N"/>
<dbReference type="FunCoup" id="P0AEB5">
    <property type="interactions" value="299"/>
</dbReference>
<dbReference type="IntAct" id="P0AEB5">
    <property type="interactions" value="4"/>
</dbReference>
<dbReference type="STRING" id="511145.b1330"/>
<dbReference type="TCDB" id="1.A.23.4.3">
    <property type="family name" value="the small conductance mechanosensitive ion channel (mscs) family"/>
</dbReference>
<dbReference type="PaxDb" id="511145-b1330"/>
<dbReference type="EnsemblBacteria" id="AAC74412">
    <property type="protein sequence ID" value="AAC74412"/>
    <property type="gene ID" value="b1330"/>
</dbReference>
<dbReference type="GeneID" id="75171457"/>
<dbReference type="GeneID" id="945898"/>
<dbReference type="KEGG" id="ecj:JW1323"/>
<dbReference type="KEGG" id="eco:b1330"/>
<dbReference type="KEGG" id="ecoc:C3026_07790"/>
<dbReference type="PATRIC" id="fig|1411691.4.peg.947"/>
<dbReference type="EchoBASE" id="EB3683"/>
<dbReference type="eggNOG" id="COG0668">
    <property type="taxonomic scope" value="Bacteria"/>
</dbReference>
<dbReference type="HOGENOM" id="CLU_037945_0_0_6"/>
<dbReference type="InParanoid" id="P0AEB5"/>
<dbReference type="OMA" id="VYYIPTN"/>
<dbReference type="OrthoDB" id="9775207at2"/>
<dbReference type="PhylomeDB" id="P0AEB5"/>
<dbReference type="BioCyc" id="EcoCyc:MONOMER0-82"/>
<dbReference type="PRO" id="PR:P0AEB5"/>
<dbReference type="Proteomes" id="UP000000625">
    <property type="component" value="Chromosome"/>
</dbReference>
<dbReference type="GO" id="GO:0005886">
    <property type="term" value="C:plasma membrane"/>
    <property type="evidence" value="ECO:0000314"/>
    <property type="project" value="EcoCyc"/>
</dbReference>
<dbReference type="GO" id="GO:0042802">
    <property type="term" value="F:identical protein binding"/>
    <property type="evidence" value="ECO:0000353"/>
    <property type="project" value="IntAct"/>
</dbReference>
<dbReference type="GO" id="GO:0008381">
    <property type="term" value="F:mechanosensitive monoatomic ion channel activity"/>
    <property type="evidence" value="ECO:0000315"/>
    <property type="project" value="EcoCyc"/>
</dbReference>
<dbReference type="GO" id="GO:0071470">
    <property type="term" value="P:cellular response to osmotic stress"/>
    <property type="evidence" value="ECO:0000315"/>
    <property type="project" value="EcoCyc"/>
</dbReference>
<dbReference type="FunFam" id="1.10.287.1260:FF:000004">
    <property type="entry name" value="Transporter, small conductance mechanosensitive ion channel family"/>
    <property type="match status" value="1"/>
</dbReference>
<dbReference type="FunFam" id="2.30.30.60:FF:000004">
    <property type="entry name" value="Transporter, small conductance mechanosensitive ion channel family"/>
    <property type="match status" value="1"/>
</dbReference>
<dbReference type="Gene3D" id="1.10.287.1260">
    <property type="match status" value="1"/>
</dbReference>
<dbReference type="Gene3D" id="2.30.30.60">
    <property type="match status" value="1"/>
</dbReference>
<dbReference type="Gene3D" id="3.30.70.100">
    <property type="match status" value="1"/>
</dbReference>
<dbReference type="InterPro" id="IPR010920">
    <property type="entry name" value="LSM_dom_sf"/>
</dbReference>
<dbReference type="InterPro" id="IPR049142">
    <property type="entry name" value="MS_channel_1st"/>
</dbReference>
<dbReference type="InterPro" id="IPR049278">
    <property type="entry name" value="MS_channel_C"/>
</dbReference>
<dbReference type="InterPro" id="IPR023408">
    <property type="entry name" value="MscS_beta-dom_sf"/>
</dbReference>
<dbReference type="InterPro" id="IPR006685">
    <property type="entry name" value="MscS_channel_2nd"/>
</dbReference>
<dbReference type="InterPro" id="IPR011066">
    <property type="entry name" value="MscS_channel_C_sf"/>
</dbReference>
<dbReference type="InterPro" id="IPR006686">
    <property type="entry name" value="MscS_channel_CS"/>
</dbReference>
<dbReference type="InterPro" id="IPR011014">
    <property type="entry name" value="MscS_channel_TM-2"/>
</dbReference>
<dbReference type="InterPro" id="IPR045042">
    <property type="entry name" value="YnaI-like"/>
</dbReference>
<dbReference type="PANTHER" id="PTHR43634:SF2">
    <property type="entry name" value="LOW CONDUCTANCE MECHANOSENSITIVE CHANNEL YNAI"/>
    <property type="match status" value="1"/>
</dbReference>
<dbReference type="PANTHER" id="PTHR43634">
    <property type="entry name" value="OW CONDUCTANCE MECHANOSENSITIVE CHANNEL"/>
    <property type="match status" value="1"/>
</dbReference>
<dbReference type="Pfam" id="PF21088">
    <property type="entry name" value="MS_channel_1st"/>
    <property type="match status" value="1"/>
</dbReference>
<dbReference type="Pfam" id="PF00924">
    <property type="entry name" value="MS_channel_2nd"/>
    <property type="match status" value="1"/>
</dbReference>
<dbReference type="Pfam" id="PF21082">
    <property type="entry name" value="MS_channel_3rd"/>
    <property type="match status" value="1"/>
</dbReference>
<dbReference type="SUPFAM" id="SSF82689">
    <property type="entry name" value="Mechanosensitive channel protein MscS (YggB), C-terminal domain"/>
    <property type="match status" value="1"/>
</dbReference>
<dbReference type="SUPFAM" id="SSF82861">
    <property type="entry name" value="Mechanosensitive channel protein MscS (YggB), transmembrane region"/>
    <property type="match status" value="1"/>
</dbReference>
<dbReference type="SUPFAM" id="SSF50182">
    <property type="entry name" value="Sm-like ribonucleoproteins"/>
    <property type="match status" value="1"/>
</dbReference>
<dbReference type="PROSITE" id="PS01246">
    <property type="entry name" value="UPF0003"/>
    <property type="match status" value="1"/>
</dbReference>
<reference key="1">
    <citation type="journal article" date="1996" name="DNA Res.">
        <title>A 570-kb DNA sequence of the Escherichia coli K-12 genome corresponding to the 28.0-40.1 min region on the linkage map.</title>
        <authorList>
            <person name="Aiba H."/>
            <person name="Baba T."/>
            <person name="Fujita K."/>
            <person name="Hayashi K."/>
            <person name="Inada T."/>
            <person name="Isono K."/>
            <person name="Itoh T."/>
            <person name="Kasai H."/>
            <person name="Kashimoto K."/>
            <person name="Kimura S."/>
            <person name="Kitakawa M."/>
            <person name="Kitagawa M."/>
            <person name="Makino K."/>
            <person name="Miki T."/>
            <person name="Mizobuchi K."/>
            <person name="Mori H."/>
            <person name="Mori T."/>
            <person name="Motomura K."/>
            <person name="Nakade S."/>
            <person name="Nakamura Y."/>
            <person name="Nashimoto H."/>
            <person name="Nishio Y."/>
            <person name="Oshima T."/>
            <person name="Saito N."/>
            <person name="Sampei G."/>
            <person name="Seki Y."/>
            <person name="Sivasundaram S."/>
            <person name="Tagami H."/>
            <person name="Takeda J."/>
            <person name="Takemoto K."/>
            <person name="Takeuchi Y."/>
            <person name="Wada C."/>
            <person name="Yamamoto Y."/>
            <person name="Horiuchi T."/>
        </authorList>
    </citation>
    <scope>NUCLEOTIDE SEQUENCE [LARGE SCALE GENOMIC DNA]</scope>
    <source>
        <strain>K12 / W3110 / ATCC 27325 / DSM 5911</strain>
    </source>
</reference>
<reference key="2">
    <citation type="journal article" date="1997" name="Science">
        <title>The complete genome sequence of Escherichia coli K-12.</title>
        <authorList>
            <person name="Blattner F.R."/>
            <person name="Plunkett G. III"/>
            <person name="Bloch C.A."/>
            <person name="Perna N.T."/>
            <person name="Burland V."/>
            <person name="Riley M."/>
            <person name="Collado-Vides J."/>
            <person name="Glasner J.D."/>
            <person name="Rode C.K."/>
            <person name="Mayhew G.F."/>
            <person name="Gregor J."/>
            <person name="Davis N.W."/>
            <person name="Kirkpatrick H.A."/>
            <person name="Goeden M.A."/>
            <person name="Rose D.J."/>
            <person name="Mau B."/>
            <person name="Shao Y."/>
        </authorList>
    </citation>
    <scope>NUCLEOTIDE SEQUENCE [LARGE SCALE GENOMIC DNA]</scope>
    <source>
        <strain>K12 / MG1655 / ATCC 47076</strain>
    </source>
</reference>
<reference key="3">
    <citation type="journal article" date="2006" name="Mol. Syst. Biol.">
        <title>Highly accurate genome sequences of Escherichia coli K-12 strains MG1655 and W3110.</title>
        <authorList>
            <person name="Hayashi K."/>
            <person name="Morooka N."/>
            <person name="Yamamoto Y."/>
            <person name="Fujita K."/>
            <person name="Isono K."/>
            <person name="Choi S."/>
            <person name="Ohtsubo E."/>
            <person name="Baba T."/>
            <person name="Wanner B.L."/>
            <person name="Mori H."/>
            <person name="Horiuchi T."/>
        </authorList>
    </citation>
    <scope>NUCLEOTIDE SEQUENCE [LARGE SCALE GENOMIC DNA]</scope>
    <source>
        <strain>K12 / W3110 / ATCC 27325 / DSM 5911</strain>
    </source>
</reference>
<reference key="4">
    <citation type="journal article" date="2005" name="Science">
        <title>Global topology analysis of the Escherichia coli inner membrane proteome.</title>
        <authorList>
            <person name="Daley D.O."/>
            <person name="Rapp M."/>
            <person name="Granseth E."/>
            <person name="Melen K."/>
            <person name="Drew D."/>
            <person name="von Heijne G."/>
        </authorList>
    </citation>
    <scope>TOPOLOGY [LARGE SCALE ANALYSIS]</scope>
    <scope>SUBCELLULAR LOCATION</scope>
    <source>
        <strain>K12 / MG1655 / ATCC 47076</strain>
    </source>
</reference>
<reference key="5">
    <citation type="journal article" date="2012" name="Channels">
        <title>Characterization of three novel mechanosensitive channel activities in Escherichia coli.</title>
        <authorList>
            <person name="Edwards M.D."/>
            <person name="Black S."/>
            <person name="Rasmussen T."/>
            <person name="Rasmussen A."/>
            <person name="Stokes N.R."/>
            <person name="Stephen T.L."/>
            <person name="Miller S."/>
            <person name="Booth I.R."/>
        </authorList>
    </citation>
    <scope>FUNCTION</scope>
    <scope>SUBUNIT</scope>
    <scope>SUBCELLULAR LOCATION</scope>
</reference>
<protein>
    <recommendedName>
        <fullName>Low conductance mechanosensitive channel YnaI</fullName>
    </recommendedName>
</protein>
<keyword id="KW-0002">3D-structure</keyword>
<keyword id="KW-0997">Cell inner membrane</keyword>
<keyword id="KW-1003">Cell membrane</keyword>
<keyword id="KW-0407">Ion channel</keyword>
<keyword id="KW-0406">Ion transport</keyword>
<keyword id="KW-0472">Membrane</keyword>
<keyword id="KW-1185">Reference proteome</keyword>
<keyword id="KW-0812">Transmembrane</keyword>
<keyword id="KW-1133">Transmembrane helix</keyword>
<keyword id="KW-0813">Transport</keyword>
<feature type="chain" id="PRO_0000110242" description="Low conductance mechanosensitive channel YnaI">
    <location>
        <begin position="1"/>
        <end position="343"/>
    </location>
</feature>
<feature type="topological domain" description="Periplasmic" evidence="1">
    <location>
        <begin position="1"/>
        <end position="9"/>
    </location>
</feature>
<feature type="transmembrane region" description="Helical" evidence="1">
    <location>
        <begin position="10"/>
        <end position="30"/>
    </location>
</feature>
<feature type="topological domain" description="Cytoplasmic" evidence="1">
    <location>
        <begin position="31"/>
        <end position="40"/>
    </location>
</feature>
<feature type="transmembrane region" description="Helical" evidence="1">
    <location>
        <begin position="41"/>
        <end position="61"/>
    </location>
</feature>
<feature type="topological domain" description="Periplasmic" evidence="1">
    <location>
        <begin position="62"/>
        <end position="77"/>
    </location>
</feature>
<feature type="transmembrane region" description="Helical" evidence="1">
    <location>
        <begin position="78"/>
        <end position="98"/>
    </location>
</feature>
<feature type="topological domain" description="Cytoplasmic" evidence="1">
    <location>
        <begin position="99"/>
        <end position="125"/>
    </location>
</feature>
<feature type="transmembrane region" description="Helical" evidence="1">
    <location>
        <begin position="126"/>
        <end position="146"/>
    </location>
</feature>
<feature type="topological domain" description="Periplasmic" evidence="1">
    <location>
        <position position="147"/>
    </location>
</feature>
<feature type="transmembrane region" description="Helical" evidence="1">
    <location>
        <begin position="148"/>
        <end position="168"/>
    </location>
</feature>
<feature type="topological domain" description="Cytoplasmic" evidence="1">
    <location>
        <begin position="169"/>
        <end position="343"/>
    </location>
</feature>
<feature type="helix" evidence="5">
    <location>
        <begin position="5"/>
        <end position="11"/>
    </location>
</feature>
<feature type="helix" evidence="5">
    <location>
        <begin position="13"/>
        <end position="30"/>
    </location>
</feature>
<feature type="strand" evidence="5">
    <location>
        <begin position="33"/>
        <end position="36"/>
    </location>
</feature>
<feature type="helix" evidence="5">
    <location>
        <begin position="41"/>
        <end position="67"/>
    </location>
</feature>
<feature type="helix" evidence="6">
    <location>
        <begin position="80"/>
        <end position="107"/>
    </location>
</feature>
<feature type="helix" evidence="7">
    <location>
        <begin position="112"/>
        <end position="138"/>
    </location>
</feature>
<feature type="helix" evidence="7">
    <location>
        <begin position="142"/>
        <end position="175"/>
    </location>
</feature>
<feature type="strand" evidence="7">
    <location>
        <begin position="181"/>
        <end position="186"/>
    </location>
</feature>
<feature type="strand" evidence="7">
    <location>
        <begin position="188"/>
        <end position="190"/>
    </location>
</feature>
<feature type="strand" evidence="7">
    <location>
        <begin position="194"/>
        <end position="199"/>
    </location>
</feature>
<feature type="strand" evidence="7">
    <location>
        <begin position="201"/>
        <end position="207"/>
    </location>
</feature>
<feature type="strand" evidence="7">
    <location>
        <begin position="213"/>
        <end position="217"/>
    </location>
</feature>
<feature type="helix" evidence="7">
    <location>
        <begin position="218"/>
        <end position="222"/>
    </location>
</feature>
<feature type="helix" evidence="7">
    <location>
        <begin position="229"/>
        <end position="231"/>
    </location>
</feature>
<feature type="strand" evidence="7">
    <location>
        <begin position="236"/>
        <end position="240"/>
    </location>
</feature>
<feature type="helix" evidence="6">
    <location>
        <begin position="245"/>
        <end position="250"/>
    </location>
</feature>
<feature type="helix" evidence="7">
    <location>
        <begin position="251"/>
        <end position="264"/>
    </location>
</feature>
<feature type="strand" evidence="5">
    <location>
        <begin position="266"/>
        <end position="268"/>
    </location>
</feature>
<feature type="strand" evidence="6">
    <location>
        <begin position="270"/>
        <end position="272"/>
    </location>
</feature>
<feature type="strand" evidence="7">
    <location>
        <begin position="275"/>
        <end position="278"/>
    </location>
</feature>
<feature type="strand" evidence="7">
    <location>
        <begin position="283"/>
        <end position="286"/>
    </location>
</feature>
<feature type="strand" evidence="7">
    <location>
        <begin position="288"/>
        <end position="295"/>
    </location>
</feature>
<feature type="strand" evidence="7">
    <location>
        <begin position="298"/>
        <end position="300"/>
    </location>
</feature>
<feature type="helix" evidence="7">
    <location>
        <begin position="301"/>
        <end position="319"/>
    </location>
</feature>
<feature type="strand" evidence="6">
    <location>
        <begin position="328"/>
        <end position="332"/>
    </location>
</feature>
<gene>
    <name type="primary">ynaI</name>
    <name type="ordered locus">b1330</name>
    <name type="ordered locus">JW1323</name>
</gene>
<name>YNAI_ECOLI</name>
<evidence type="ECO:0000255" key="1"/>
<evidence type="ECO:0000269" key="2">
    <source>
    </source>
</evidence>
<evidence type="ECO:0000269" key="3">
    <source>
    </source>
</evidence>
<evidence type="ECO:0000305" key="4"/>
<evidence type="ECO:0007829" key="5">
    <source>
        <dbReference type="PDB" id="6URT"/>
    </source>
</evidence>
<evidence type="ECO:0007829" key="6">
    <source>
        <dbReference type="PDB" id="6ZYD"/>
    </source>
</evidence>
<evidence type="ECO:0007829" key="7">
    <source>
        <dbReference type="PDB" id="7N4T"/>
    </source>
</evidence>
<comment type="function">
    <text evidence="3">Mechanosensitive channel that protects cells against hypoosmotic stress when highly overexpressed.</text>
</comment>
<comment type="subunit">
    <text evidence="3">Homoheptamer.</text>
</comment>
<comment type="interaction">
    <interactant intactId="EBI-9141361">
        <id>P0AEB5</id>
    </interactant>
    <interactant intactId="EBI-9141361">
        <id>P0AEB5</id>
        <label>ynaI</label>
    </interactant>
    <organismsDiffer>false</organismsDiffer>
    <experiments>2</experiments>
</comment>
<comment type="subcellular location">
    <subcellularLocation>
        <location evidence="2 3">Cell inner membrane</location>
        <topology evidence="2 3">Multi-pass membrane protein</topology>
    </subcellularLocation>
</comment>
<comment type="similarity">
    <text evidence="4">Belongs to the MscS (TC 1.A.23) family.</text>
</comment>
<organism>
    <name type="scientific">Escherichia coli (strain K12)</name>
    <dbReference type="NCBI Taxonomy" id="83333"/>
    <lineage>
        <taxon>Bacteria</taxon>
        <taxon>Pseudomonadati</taxon>
        <taxon>Pseudomonadota</taxon>
        <taxon>Gammaproteobacteria</taxon>
        <taxon>Enterobacterales</taxon>
        <taxon>Enterobacteriaceae</taxon>
        <taxon>Escherichia</taxon>
    </lineage>
</organism>
<proteinExistence type="evidence at protein level"/>
<accession>P0AEB5</accession>
<accession>P77253</accession>
<sequence>MIAELFTNNALNLVIIFGSCAALILMSFWFRRGNRKRKGFLFHAVQFLIYTIIISAVGSIINYVIENYKLKFITPGVIDFICTSLIAVILTIKLFLLINQFEKQQIKKGRDITSARIMSRIIKITIIVVLVLLYGEHFGMSLSGLLTFGGIGGLAVGMAGKDILSNFFSGIMLYFDRPFSIGDWIRSPDRNIEGTVAEIGWRITKITTFDNRPLYVPNSLFSSISVENPGRMTNRRITTTIGLRYEDAAKVGVIVEAVREMLKNHPAIDQRQTLLVYFNQFADSSLNIMVYCFTKTTVWAEWLAAQQDVYLKIIDIVQSHGADFAFPSQTLYMDNITPPEQGR</sequence>